<comment type="function">
    <text evidence="1 5">Serine/threonine-protein kinase involved in transcription regulation. Phosphorylates the UBC2/RAD6 ubiquitin-conjugating enzyme (E2), leading to monoubiquitination of histone H2B and the silencing of telomeric-associated genes. Also required for histone H3 methylation. Necessary for the recovery from pheromone-induced growth arrest in the cell cycle G1 phase (By similarity). Required for pseudohyphal growth and virulence in mice.</text>
</comment>
<comment type="catalytic activity">
    <reaction>
        <text>L-seryl-[protein] + ATP = O-phospho-L-seryl-[protein] + ADP + H(+)</text>
        <dbReference type="Rhea" id="RHEA:17989"/>
        <dbReference type="Rhea" id="RHEA-COMP:9863"/>
        <dbReference type="Rhea" id="RHEA-COMP:11604"/>
        <dbReference type="ChEBI" id="CHEBI:15378"/>
        <dbReference type="ChEBI" id="CHEBI:29999"/>
        <dbReference type="ChEBI" id="CHEBI:30616"/>
        <dbReference type="ChEBI" id="CHEBI:83421"/>
        <dbReference type="ChEBI" id="CHEBI:456216"/>
        <dbReference type="EC" id="2.7.11.22"/>
    </reaction>
</comment>
<comment type="catalytic activity">
    <reaction>
        <text>L-threonyl-[protein] + ATP = O-phospho-L-threonyl-[protein] + ADP + H(+)</text>
        <dbReference type="Rhea" id="RHEA:46608"/>
        <dbReference type="Rhea" id="RHEA-COMP:11060"/>
        <dbReference type="Rhea" id="RHEA-COMP:11605"/>
        <dbReference type="ChEBI" id="CHEBI:15378"/>
        <dbReference type="ChEBI" id="CHEBI:30013"/>
        <dbReference type="ChEBI" id="CHEBI:30616"/>
        <dbReference type="ChEBI" id="CHEBI:61977"/>
        <dbReference type="ChEBI" id="CHEBI:456216"/>
        <dbReference type="EC" id="2.7.11.22"/>
    </reaction>
</comment>
<comment type="catalytic activity">
    <reaction>
        <text>[DNA-directed RNA polymerase] + ATP = phospho-[DNA-directed RNA polymerase] + ADP + H(+)</text>
        <dbReference type="Rhea" id="RHEA:10216"/>
        <dbReference type="Rhea" id="RHEA-COMP:11321"/>
        <dbReference type="Rhea" id="RHEA-COMP:11322"/>
        <dbReference type="ChEBI" id="CHEBI:15378"/>
        <dbReference type="ChEBI" id="CHEBI:30616"/>
        <dbReference type="ChEBI" id="CHEBI:43176"/>
        <dbReference type="ChEBI" id="CHEBI:68546"/>
        <dbReference type="ChEBI" id="CHEBI:456216"/>
        <dbReference type="EC" id="2.7.11.23"/>
    </reaction>
</comment>
<comment type="subcellular location">
    <subcellularLocation>
        <location evidence="1">Nucleus</location>
    </subcellularLocation>
</comment>
<comment type="similarity">
    <text evidence="6">Belongs to the protein kinase superfamily. CMGC Ser/Thr protein kinase family. CDC2/CDKX subfamily.</text>
</comment>
<feature type="chain" id="PRO_0000085679" description="Serine/threonine-protein kinase BUR1">
    <location>
        <begin position="1"/>
        <end position="745"/>
    </location>
</feature>
<feature type="domain" description="Protein kinase" evidence="2">
    <location>
        <begin position="44"/>
        <end position="349"/>
    </location>
</feature>
<feature type="region of interest" description="Disordered" evidence="4">
    <location>
        <begin position="1"/>
        <end position="21"/>
    </location>
</feature>
<feature type="region of interest" description="Disordered" evidence="4">
    <location>
        <begin position="380"/>
        <end position="701"/>
    </location>
</feature>
<feature type="compositionally biased region" description="Basic and acidic residues" evidence="4">
    <location>
        <begin position="380"/>
        <end position="406"/>
    </location>
</feature>
<feature type="compositionally biased region" description="Basic and acidic residues" evidence="4">
    <location>
        <begin position="428"/>
        <end position="475"/>
    </location>
</feature>
<feature type="compositionally biased region" description="Basic and acidic residues" evidence="4">
    <location>
        <begin position="493"/>
        <end position="508"/>
    </location>
</feature>
<feature type="compositionally biased region" description="Low complexity" evidence="4">
    <location>
        <begin position="516"/>
        <end position="534"/>
    </location>
</feature>
<feature type="compositionally biased region" description="Basic and acidic residues" evidence="4">
    <location>
        <begin position="547"/>
        <end position="557"/>
    </location>
</feature>
<feature type="compositionally biased region" description="Polar residues" evidence="4">
    <location>
        <begin position="558"/>
        <end position="567"/>
    </location>
</feature>
<feature type="compositionally biased region" description="Polar residues" evidence="4">
    <location>
        <begin position="586"/>
        <end position="598"/>
    </location>
</feature>
<feature type="compositionally biased region" description="Basic and acidic residues" evidence="4">
    <location>
        <begin position="599"/>
        <end position="631"/>
    </location>
</feature>
<feature type="compositionally biased region" description="Low complexity" evidence="4">
    <location>
        <begin position="632"/>
        <end position="660"/>
    </location>
</feature>
<feature type="compositionally biased region" description="Polar residues" evidence="4">
    <location>
        <begin position="661"/>
        <end position="674"/>
    </location>
</feature>
<feature type="compositionally biased region" description="Acidic residues" evidence="4">
    <location>
        <begin position="692"/>
        <end position="701"/>
    </location>
</feature>
<feature type="active site" description="Proton acceptor" evidence="2 3">
    <location>
        <position position="179"/>
    </location>
</feature>
<feature type="binding site" evidence="2">
    <location>
        <begin position="50"/>
        <end position="58"/>
    </location>
    <ligand>
        <name>ATP</name>
        <dbReference type="ChEBI" id="CHEBI:30616"/>
    </ligand>
</feature>
<feature type="binding site" evidence="2">
    <location>
        <position position="73"/>
    </location>
    <ligand>
        <name>ATP</name>
        <dbReference type="ChEBI" id="CHEBI:30616"/>
    </ligand>
</feature>
<feature type="sequence conflict" description="In Ref. 1; AAD25159." evidence="6" ref="1">
    <original>LW</original>
    <variation>QR</variation>
    <location>
        <begin position="249"/>
        <end position="250"/>
    </location>
</feature>
<feature type="sequence conflict" description="In Ref. 1; AAD25159." evidence="6" ref="1">
    <original>G</original>
    <variation>GG</variation>
    <location>
        <position position="414"/>
    </location>
</feature>
<feature type="sequence conflict" description="In Ref. 1; AAD25159." evidence="6" ref="1">
    <original>A</original>
    <variation>G</variation>
    <location>
        <position position="492"/>
    </location>
</feature>
<feature type="sequence conflict" description="In Ref. 1; AAD25159." evidence="6" ref="1">
    <original>K</original>
    <variation>Q</variation>
    <location>
        <position position="505"/>
    </location>
</feature>
<accession>Q9Y7W4</accession>
<accession>A0A1D8PH82</accession>
<accession>Q59ZJ5</accession>
<accession>Q59ZJ6</accession>
<accession>Q59ZR0</accession>
<gene>
    <name type="primary">CRK1</name>
    <name type="synonym">BUR1</name>
    <name type="ordered locus">CAALFM_C204930CA</name>
    <name type="ORF">CaO19.11006</name>
    <name type="ORF">CaO19.3523/3524</name>
</gene>
<dbReference type="EC" id="2.7.11.22"/>
<dbReference type="EC" id="2.7.11.23"/>
<dbReference type="EMBL" id="U92261">
    <property type="protein sequence ID" value="AAD25159.1"/>
    <property type="molecule type" value="Genomic_DNA"/>
</dbReference>
<dbReference type="EMBL" id="CP017624">
    <property type="protein sequence ID" value="AOW27512.1"/>
    <property type="molecule type" value="Genomic_DNA"/>
</dbReference>
<dbReference type="RefSeq" id="XP_714883.2">
    <property type="nucleotide sequence ID" value="XM_709790.2"/>
</dbReference>
<dbReference type="SMR" id="Q9Y7W4"/>
<dbReference type="BioGRID" id="1226444">
    <property type="interactions" value="3"/>
</dbReference>
<dbReference type="IntAct" id="Q9Y7W4">
    <property type="interactions" value="2"/>
</dbReference>
<dbReference type="MINT" id="Q9Y7W4"/>
<dbReference type="STRING" id="237561.Q9Y7W4"/>
<dbReference type="EnsemblFungi" id="C2_04930C_A-T">
    <property type="protein sequence ID" value="C2_04930C_A-T-p1"/>
    <property type="gene ID" value="C2_04930C_A"/>
</dbReference>
<dbReference type="GeneID" id="3643414"/>
<dbReference type="KEGG" id="cal:CAALFM_C204930CA"/>
<dbReference type="CGD" id="CAL0000191033">
    <property type="gene designation" value="CRK1"/>
</dbReference>
<dbReference type="VEuPathDB" id="FungiDB:C2_04930C_A"/>
<dbReference type="eggNOG" id="KOG0600">
    <property type="taxonomic scope" value="Eukaryota"/>
</dbReference>
<dbReference type="HOGENOM" id="CLU_000288_181_21_1"/>
<dbReference type="InParanoid" id="Q9Y7W4"/>
<dbReference type="OrthoDB" id="28397at2759"/>
<dbReference type="PHI-base" id="PHI:172"/>
<dbReference type="PRO" id="PR:Q9Y7W4"/>
<dbReference type="Proteomes" id="UP000000559">
    <property type="component" value="Chromosome 2"/>
</dbReference>
<dbReference type="GO" id="GO:0005634">
    <property type="term" value="C:nucleus"/>
    <property type="evidence" value="ECO:0000318"/>
    <property type="project" value="GO_Central"/>
</dbReference>
<dbReference type="GO" id="GO:0005524">
    <property type="term" value="F:ATP binding"/>
    <property type="evidence" value="ECO:0007669"/>
    <property type="project" value="UniProtKB-KW"/>
</dbReference>
<dbReference type="GO" id="GO:0004693">
    <property type="term" value="F:cyclin-dependent protein serine/threonine kinase activity"/>
    <property type="evidence" value="ECO:0000318"/>
    <property type="project" value="GO_Central"/>
</dbReference>
<dbReference type="GO" id="GO:0004672">
    <property type="term" value="F:protein kinase activity"/>
    <property type="evidence" value="ECO:0000314"/>
    <property type="project" value="CGD"/>
</dbReference>
<dbReference type="GO" id="GO:0106310">
    <property type="term" value="F:protein serine kinase activity"/>
    <property type="evidence" value="ECO:0007669"/>
    <property type="project" value="RHEA"/>
</dbReference>
<dbReference type="GO" id="GO:0008353">
    <property type="term" value="F:RNA polymerase II CTD heptapeptide repeat kinase activity"/>
    <property type="evidence" value="ECO:0007669"/>
    <property type="project" value="UniProtKB-EC"/>
</dbReference>
<dbReference type="GO" id="GO:0071467">
    <property type="term" value="P:cellular response to pH"/>
    <property type="evidence" value="ECO:0000315"/>
    <property type="project" value="CGD"/>
</dbReference>
<dbReference type="GO" id="GO:0030447">
    <property type="term" value="P:filamentous growth"/>
    <property type="evidence" value="ECO:0000315"/>
    <property type="project" value="CGD"/>
</dbReference>
<dbReference type="GO" id="GO:0044182">
    <property type="term" value="P:filamentous growth of a population of unicellular organisms"/>
    <property type="evidence" value="ECO:0000315"/>
    <property type="project" value="CGD"/>
</dbReference>
<dbReference type="GO" id="GO:0036177">
    <property type="term" value="P:filamentous growth of a population of unicellular organisms in response to pH"/>
    <property type="evidence" value="ECO:0000315"/>
    <property type="project" value="CGD"/>
</dbReference>
<dbReference type="GO" id="GO:0000128">
    <property type="term" value="P:flocculation"/>
    <property type="evidence" value="ECO:0000315"/>
    <property type="project" value="CGD"/>
</dbReference>
<dbReference type="GO" id="GO:1900742">
    <property type="term" value="P:negative regulation of filamentous growth of a population of unicellular organisms in response to pH"/>
    <property type="evidence" value="ECO:0000315"/>
    <property type="project" value="CGD"/>
</dbReference>
<dbReference type="GO" id="GO:0060257">
    <property type="term" value="P:negative regulation of flocculation"/>
    <property type="evidence" value="ECO:0000315"/>
    <property type="project" value="CGD"/>
</dbReference>
<dbReference type="GO" id="GO:1900430">
    <property type="term" value="P:positive regulation of filamentous growth of a population of unicellular organisms"/>
    <property type="evidence" value="ECO:0000315"/>
    <property type="project" value="CGD"/>
</dbReference>
<dbReference type="GO" id="GO:0032968">
    <property type="term" value="P:positive regulation of transcription elongation by RNA polymerase II"/>
    <property type="evidence" value="ECO:0000318"/>
    <property type="project" value="GO_Central"/>
</dbReference>
<dbReference type="FunFam" id="1.10.510.10:FF:000415">
    <property type="entry name" value="CMGC/CDK/CRK7 protein kinase, variant"/>
    <property type="match status" value="1"/>
</dbReference>
<dbReference type="Gene3D" id="3.30.200.20">
    <property type="entry name" value="Phosphorylase Kinase, domain 1"/>
    <property type="match status" value="1"/>
</dbReference>
<dbReference type="Gene3D" id="1.10.510.10">
    <property type="entry name" value="Transferase(Phosphotransferase) domain 1"/>
    <property type="match status" value="1"/>
</dbReference>
<dbReference type="InterPro" id="IPR050108">
    <property type="entry name" value="CDK"/>
</dbReference>
<dbReference type="InterPro" id="IPR011009">
    <property type="entry name" value="Kinase-like_dom_sf"/>
</dbReference>
<dbReference type="InterPro" id="IPR000719">
    <property type="entry name" value="Prot_kinase_dom"/>
</dbReference>
<dbReference type="InterPro" id="IPR017441">
    <property type="entry name" value="Protein_kinase_ATP_BS"/>
</dbReference>
<dbReference type="InterPro" id="IPR008271">
    <property type="entry name" value="Ser/Thr_kinase_AS"/>
</dbReference>
<dbReference type="PANTHER" id="PTHR24056">
    <property type="entry name" value="CELL DIVISION PROTEIN KINASE"/>
    <property type="match status" value="1"/>
</dbReference>
<dbReference type="PANTHER" id="PTHR24056:SF233">
    <property type="entry name" value="CYCLIN-DEPENDENT KINASE 9"/>
    <property type="match status" value="1"/>
</dbReference>
<dbReference type="Pfam" id="PF00069">
    <property type="entry name" value="Pkinase"/>
    <property type="match status" value="1"/>
</dbReference>
<dbReference type="SMART" id="SM00220">
    <property type="entry name" value="S_TKc"/>
    <property type="match status" value="1"/>
</dbReference>
<dbReference type="SUPFAM" id="SSF56112">
    <property type="entry name" value="Protein kinase-like (PK-like)"/>
    <property type="match status" value="1"/>
</dbReference>
<dbReference type="PROSITE" id="PS00107">
    <property type="entry name" value="PROTEIN_KINASE_ATP"/>
    <property type="match status" value="1"/>
</dbReference>
<dbReference type="PROSITE" id="PS50011">
    <property type="entry name" value="PROTEIN_KINASE_DOM"/>
    <property type="match status" value="1"/>
</dbReference>
<dbReference type="PROSITE" id="PS00108">
    <property type="entry name" value="PROTEIN_KINASE_ST"/>
    <property type="match status" value="1"/>
</dbReference>
<reference key="1">
    <citation type="journal article" date="2000" name="Mol. Cell. Biol.">
        <title>Crk1, a novel Cdc2-related protein kinase, is required for hyphal development and virulence in Candida albicans.</title>
        <authorList>
            <person name="Chen J."/>
            <person name="Zhou S."/>
            <person name="Wang Q."/>
            <person name="Chen X."/>
            <person name="Pan T."/>
            <person name="Liu H."/>
        </authorList>
    </citation>
    <scope>NUCLEOTIDE SEQUENCE [GENOMIC DNA]</scope>
    <scope>FUNCTION</scope>
</reference>
<reference key="2">
    <citation type="journal article" date="2004" name="Proc. Natl. Acad. Sci. U.S.A.">
        <title>The diploid genome sequence of Candida albicans.</title>
        <authorList>
            <person name="Jones T."/>
            <person name="Federspiel N.A."/>
            <person name="Chibana H."/>
            <person name="Dungan J."/>
            <person name="Kalman S."/>
            <person name="Magee B.B."/>
            <person name="Newport G."/>
            <person name="Thorstenson Y.R."/>
            <person name="Agabian N."/>
            <person name="Magee P.T."/>
            <person name="Davis R.W."/>
            <person name="Scherer S."/>
        </authorList>
    </citation>
    <scope>NUCLEOTIDE SEQUENCE [LARGE SCALE GENOMIC DNA]</scope>
    <source>
        <strain>SC5314 / ATCC MYA-2876</strain>
    </source>
</reference>
<reference key="3">
    <citation type="journal article" date="2007" name="Genome Biol.">
        <title>Assembly of the Candida albicans genome into sixteen supercontigs aligned on the eight chromosomes.</title>
        <authorList>
            <person name="van het Hoog M."/>
            <person name="Rast T.J."/>
            <person name="Martchenko M."/>
            <person name="Grindle S."/>
            <person name="Dignard D."/>
            <person name="Hogues H."/>
            <person name="Cuomo C."/>
            <person name="Berriman M."/>
            <person name="Scherer S."/>
            <person name="Magee B.B."/>
            <person name="Whiteway M."/>
            <person name="Chibana H."/>
            <person name="Nantel A."/>
            <person name="Magee P.T."/>
        </authorList>
    </citation>
    <scope>GENOME REANNOTATION</scope>
    <source>
        <strain>SC5314 / ATCC MYA-2876</strain>
    </source>
</reference>
<reference key="4">
    <citation type="journal article" date="2013" name="Genome Biol.">
        <title>Assembly of a phased diploid Candida albicans genome facilitates allele-specific measurements and provides a simple model for repeat and indel structure.</title>
        <authorList>
            <person name="Muzzey D."/>
            <person name="Schwartz K."/>
            <person name="Weissman J.S."/>
            <person name="Sherlock G."/>
        </authorList>
    </citation>
    <scope>NUCLEOTIDE SEQUENCE [LARGE SCALE GENOMIC DNA]</scope>
    <scope>GENOME REANNOTATION</scope>
    <source>
        <strain>SC5314 / ATCC MYA-2876</strain>
    </source>
</reference>
<protein>
    <recommendedName>
        <fullName>Serine/threonine-protein kinase BUR1</fullName>
        <ecNumber>2.7.11.22</ecNumber>
        <ecNumber>2.7.11.23</ecNumber>
    </recommendedName>
</protein>
<keyword id="KW-0067">ATP-binding</keyword>
<keyword id="KW-0418">Kinase</keyword>
<keyword id="KW-0547">Nucleotide-binding</keyword>
<keyword id="KW-0539">Nucleus</keyword>
<keyword id="KW-1185">Reference proteome</keyword>
<keyword id="KW-0723">Serine/threonine-protein kinase</keyword>
<keyword id="KW-0808">Transferase</keyword>
<evidence type="ECO:0000250" key="1"/>
<evidence type="ECO:0000255" key="2">
    <source>
        <dbReference type="PROSITE-ProRule" id="PRU00159"/>
    </source>
</evidence>
<evidence type="ECO:0000255" key="3">
    <source>
        <dbReference type="PROSITE-ProRule" id="PRU10027"/>
    </source>
</evidence>
<evidence type="ECO:0000256" key="4">
    <source>
        <dbReference type="SAM" id="MobiDB-lite"/>
    </source>
</evidence>
<evidence type="ECO:0000269" key="5">
    <source>
    </source>
</evidence>
<evidence type="ECO:0000305" key="6"/>
<proteinExistence type="inferred from homology"/>
<name>BUR1_CANAL</name>
<sequence length="745" mass="83339">MSVIAGHHVPRSNDQRQYDTPSVPINIAPDSEGHIHEMSRLKDYEVIEKLGQGTFGVVQKAKSKKDGSLVAIKQLINHSAKEGFPITAMREITILKQLNHKNILTIQDMIFEEPKMSNRTDIITMRGSFYTVTPYMSSDLVGLLENPKIKLELGQIKCIMQQLLKGIQYVHNQKFLHRDIKAANILIGQDGVLKIADFGLARIYHGNVPRLGMGPGGGEKAYTGLVVTRWYRPPEILLGERKYTTAVDLWGIGCVFAELFTGKPILVGKSDSHQAQIVFELVGSPLTWTDAAKLPNKNEYSCGLACKRSLEAKFASIMPTEAIDLLSGLLTLDPFKRLNALDALNHKFFSTDPLPLLPTQMPKFEESHEIDKERFKKLKDKEQAVSELKPPTEIRYDNHSESRYNADHSTFGGGVGGKETSFSSGKSDYIDHYEPRARRDHYEPRIRNDNKDSNDVRGEFESATRQEQRRRDIQNRLDAGGMDTYIPKTTTAKLREHSGTESLSKKYDNYQPINVSRGSKSPSPSKLSSISQSKADLISKPSAPKVASRESSLERKQVSNGIRTTTDVEPPRARARRPTDMFGRPLTSNSTQAQPTRNKSVERPKDLEKPTNGVTEDRNKKPVLEEKKEVVKPNLAIPKIKKSSSLVSLSSRSSTTPVISNPSKVTKRAASSVTPPVLPKKPKISKTSSESEVSDLEEDSDFTGENATVFERFMALEQLQKSPVYKRIINEKMRFEKLSGGHKSM</sequence>
<organism>
    <name type="scientific">Candida albicans (strain SC5314 / ATCC MYA-2876)</name>
    <name type="common">Yeast</name>
    <dbReference type="NCBI Taxonomy" id="237561"/>
    <lineage>
        <taxon>Eukaryota</taxon>
        <taxon>Fungi</taxon>
        <taxon>Dikarya</taxon>
        <taxon>Ascomycota</taxon>
        <taxon>Saccharomycotina</taxon>
        <taxon>Pichiomycetes</taxon>
        <taxon>Debaryomycetaceae</taxon>
        <taxon>Candida/Lodderomyces clade</taxon>
        <taxon>Candida</taxon>
    </lineage>
</organism>